<organism>
    <name type="scientific">Desulforapulum autotrophicum (strain ATCC 43914 / DSM 3382 / VKM B-1955 / HRM2)</name>
    <name type="common">Desulfobacterium autotrophicum</name>
    <dbReference type="NCBI Taxonomy" id="177437"/>
    <lineage>
        <taxon>Bacteria</taxon>
        <taxon>Pseudomonadati</taxon>
        <taxon>Thermodesulfobacteriota</taxon>
        <taxon>Desulfobacteria</taxon>
        <taxon>Desulfobacterales</taxon>
        <taxon>Desulfobacteraceae</taxon>
        <taxon>Desulforapulum</taxon>
    </lineage>
</organism>
<feature type="chain" id="PRO_1000215056" description="Large ribosomal subunit protein uL30">
    <location>
        <begin position="1"/>
        <end position="60"/>
    </location>
</feature>
<reference key="1">
    <citation type="journal article" date="2009" name="Environ. Microbiol.">
        <title>Genome sequence of Desulfobacterium autotrophicum HRM2, a marine sulfate reducer oxidizing organic carbon completely to carbon dioxide.</title>
        <authorList>
            <person name="Strittmatter A.W."/>
            <person name="Liesegang H."/>
            <person name="Rabus R."/>
            <person name="Decker I."/>
            <person name="Amann J."/>
            <person name="Andres S."/>
            <person name="Henne A."/>
            <person name="Fricke W.F."/>
            <person name="Martinez-Arias R."/>
            <person name="Bartels D."/>
            <person name="Goesmann A."/>
            <person name="Krause L."/>
            <person name="Puehler A."/>
            <person name="Klenk H.P."/>
            <person name="Richter M."/>
            <person name="Schuler M."/>
            <person name="Gloeckner F.O."/>
            <person name="Meyerdierks A."/>
            <person name="Gottschalk G."/>
            <person name="Amann R."/>
        </authorList>
    </citation>
    <scope>NUCLEOTIDE SEQUENCE [LARGE SCALE GENOMIC DNA]</scope>
    <source>
        <strain>ATCC 43914 / DSM 3382 / VKM B-1955 / HRM2</strain>
    </source>
</reference>
<gene>
    <name evidence="1" type="primary">rpmD</name>
    <name type="ordered locus">HRM2_36080</name>
</gene>
<sequence length="60" mass="6870">MSGKLKITQVRSLVGRNEKHRRIVRALGLKRMHMTVEHTNNPAIMGMVKKIPHLVTVEEV</sequence>
<comment type="subunit">
    <text evidence="1">Part of the 50S ribosomal subunit.</text>
</comment>
<comment type="similarity">
    <text evidence="1">Belongs to the universal ribosomal protein uL30 family.</text>
</comment>
<accession>C0Q9V5</accession>
<keyword id="KW-1185">Reference proteome</keyword>
<keyword id="KW-0687">Ribonucleoprotein</keyword>
<keyword id="KW-0689">Ribosomal protein</keyword>
<evidence type="ECO:0000255" key="1">
    <source>
        <dbReference type="HAMAP-Rule" id="MF_01371"/>
    </source>
</evidence>
<evidence type="ECO:0000305" key="2"/>
<name>RL30_DESAH</name>
<dbReference type="EMBL" id="CP001087">
    <property type="protein sequence ID" value="ACN16673.1"/>
    <property type="molecule type" value="Genomic_DNA"/>
</dbReference>
<dbReference type="RefSeq" id="WP_015905423.1">
    <property type="nucleotide sequence ID" value="NC_012108.1"/>
</dbReference>
<dbReference type="SMR" id="C0Q9V5"/>
<dbReference type="STRING" id="177437.HRM2_36080"/>
<dbReference type="KEGG" id="dat:HRM2_36080"/>
<dbReference type="eggNOG" id="COG1841">
    <property type="taxonomic scope" value="Bacteria"/>
</dbReference>
<dbReference type="HOGENOM" id="CLU_131047_1_3_7"/>
<dbReference type="OrthoDB" id="9812790at2"/>
<dbReference type="Proteomes" id="UP000000442">
    <property type="component" value="Chromosome"/>
</dbReference>
<dbReference type="GO" id="GO:0022625">
    <property type="term" value="C:cytosolic large ribosomal subunit"/>
    <property type="evidence" value="ECO:0007669"/>
    <property type="project" value="TreeGrafter"/>
</dbReference>
<dbReference type="GO" id="GO:0003735">
    <property type="term" value="F:structural constituent of ribosome"/>
    <property type="evidence" value="ECO:0007669"/>
    <property type="project" value="InterPro"/>
</dbReference>
<dbReference type="GO" id="GO:0006412">
    <property type="term" value="P:translation"/>
    <property type="evidence" value="ECO:0007669"/>
    <property type="project" value="InterPro"/>
</dbReference>
<dbReference type="CDD" id="cd01658">
    <property type="entry name" value="Ribosomal_L30"/>
    <property type="match status" value="1"/>
</dbReference>
<dbReference type="FunFam" id="3.30.1390.20:FF:000001">
    <property type="entry name" value="50S ribosomal protein L30"/>
    <property type="match status" value="1"/>
</dbReference>
<dbReference type="Gene3D" id="3.30.1390.20">
    <property type="entry name" value="Ribosomal protein L30, ferredoxin-like fold domain"/>
    <property type="match status" value="1"/>
</dbReference>
<dbReference type="HAMAP" id="MF_01371_B">
    <property type="entry name" value="Ribosomal_uL30_B"/>
    <property type="match status" value="1"/>
</dbReference>
<dbReference type="InterPro" id="IPR036919">
    <property type="entry name" value="Ribo_uL30_ferredoxin-like_sf"/>
</dbReference>
<dbReference type="InterPro" id="IPR005996">
    <property type="entry name" value="Ribosomal_uL30_bac-type"/>
</dbReference>
<dbReference type="InterPro" id="IPR016082">
    <property type="entry name" value="Ribosomal_uL30_ferredoxin-like"/>
</dbReference>
<dbReference type="NCBIfam" id="TIGR01308">
    <property type="entry name" value="rpmD_bact"/>
    <property type="match status" value="1"/>
</dbReference>
<dbReference type="PANTHER" id="PTHR15892:SF2">
    <property type="entry name" value="LARGE RIBOSOMAL SUBUNIT PROTEIN UL30M"/>
    <property type="match status" value="1"/>
</dbReference>
<dbReference type="PANTHER" id="PTHR15892">
    <property type="entry name" value="MITOCHONDRIAL RIBOSOMAL PROTEIN L30"/>
    <property type="match status" value="1"/>
</dbReference>
<dbReference type="Pfam" id="PF00327">
    <property type="entry name" value="Ribosomal_L30"/>
    <property type="match status" value="1"/>
</dbReference>
<dbReference type="PIRSF" id="PIRSF002211">
    <property type="entry name" value="Ribosomal_L30_bac-type"/>
    <property type="match status" value="1"/>
</dbReference>
<dbReference type="SUPFAM" id="SSF55129">
    <property type="entry name" value="Ribosomal protein L30p/L7e"/>
    <property type="match status" value="1"/>
</dbReference>
<protein>
    <recommendedName>
        <fullName evidence="1">Large ribosomal subunit protein uL30</fullName>
    </recommendedName>
    <alternativeName>
        <fullName evidence="2">50S ribosomal protein L30</fullName>
    </alternativeName>
</protein>
<proteinExistence type="inferred from homology"/>